<reference key="1">
    <citation type="journal article" date="2001" name="DNA Res.">
        <title>Complete genomic sequence of the filamentous nitrogen-fixing cyanobacterium Anabaena sp. strain PCC 7120.</title>
        <authorList>
            <person name="Kaneko T."/>
            <person name="Nakamura Y."/>
            <person name="Wolk C.P."/>
            <person name="Kuritz T."/>
            <person name="Sasamoto S."/>
            <person name="Watanabe A."/>
            <person name="Iriguchi M."/>
            <person name="Ishikawa A."/>
            <person name="Kawashima K."/>
            <person name="Kimura T."/>
            <person name="Kishida Y."/>
            <person name="Kohara M."/>
            <person name="Matsumoto M."/>
            <person name="Matsuno A."/>
            <person name="Muraki A."/>
            <person name="Nakazaki N."/>
            <person name="Shimpo S."/>
            <person name="Sugimoto M."/>
            <person name="Takazawa M."/>
            <person name="Yamada M."/>
            <person name="Yasuda M."/>
            <person name="Tabata S."/>
        </authorList>
    </citation>
    <scope>NUCLEOTIDE SEQUENCE [LARGE SCALE GENOMIC DNA]</scope>
    <source>
        <strain>PCC 7120 / SAG 25.82 / UTEX 2576</strain>
    </source>
</reference>
<proteinExistence type="inferred from homology"/>
<gene>
    <name evidence="1" type="primary">queC</name>
    <name type="ordered locus">alr5095</name>
</gene>
<sequence>MKAVILLSGGLDSSTILYQAKADGCECYSISFDYQQRHRRELHSAFLVAQTAGIVQHQVINFDLRLWGGSALTDDNIDLPQERSLDAMSQNIPVTYVPARNTIFLSFALAYAEAIAAQRVYIGVNALDYSGYPDCRPDYIEAMQEVFRLGTKQGREGQPINIVAPLINLKKTEIIQLGNQLGVPWNLTWSCYAGGDVACGVCDSCRLRLAAFAELGLEDPLPYAYLKGV</sequence>
<organism>
    <name type="scientific">Nostoc sp. (strain PCC 7120 / SAG 25.82 / UTEX 2576)</name>
    <dbReference type="NCBI Taxonomy" id="103690"/>
    <lineage>
        <taxon>Bacteria</taxon>
        <taxon>Bacillati</taxon>
        <taxon>Cyanobacteriota</taxon>
        <taxon>Cyanophyceae</taxon>
        <taxon>Nostocales</taxon>
        <taxon>Nostocaceae</taxon>
        <taxon>Nostoc</taxon>
    </lineage>
</organism>
<keyword id="KW-0067">ATP-binding</keyword>
<keyword id="KW-0436">Ligase</keyword>
<keyword id="KW-0479">Metal-binding</keyword>
<keyword id="KW-0547">Nucleotide-binding</keyword>
<keyword id="KW-0671">Queuosine biosynthesis</keyword>
<keyword id="KW-1185">Reference proteome</keyword>
<keyword id="KW-0862">Zinc</keyword>
<name>QUEC_NOSS1</name>
<protein>
    <recommendedName>
        <fullName evidence="1">7-cyano-7-deazaguanine synthase</fullName>
        <ecNumber evidence="1">6.3.4.20</ecNumber>
    </recommendedName>
    <alternativeName>
        <fullName evidence="1">7-cyano-7-carbaguanine synthase</fullName>
    </alternativeName>
    <alternativeName>
        <fullName evidence="1">PreQ(0) synthase</fullName>
    </alternativeName>
    <alternativeName>
        <fullName evidence="1">Queuosine biosynthesis protein QueC</fullName>
    </alternativeName>
</protein>
<evidence type="ECO:0000255" key="1">
    <source>
        <dbReference type="HAMAP-Rule" id="MF_01633"/>
    </source>
</evidence>
<accession>Q8YM45</accession>
<dbReference type="EC" id="6.3.4.20" evidence="1"/>
<dbReference type="EMBL" id="BA000019">
    <property type="protein sequence ID" value="BAB76794.1"/>
    <property type="molecule type" value="Genomic_DNA"/>
</dbReference>
<dbReference type="PIR" id="AG2442">
    <property type="entry name" value="AG2442"/>
</dbReference>
<dbReference type="RefSeq" id="WP_010999221.1">
    <property type="nucleotide sequence ID" value="NZ_RSCN01000014.1"/>
</dbReference>
<dbReference type="SMR" id="Q8YM45"/>
<dbReference type="STRING" id="103690.gene:10497153"/>
<dbReference type="KEGG" id="ana:alr5095"/>
<dbReference type="eggNOG" id="COG0603">
    <property type="taxonomic scope" value="Bacteria"/>
</dbReference>
<dbReference type="OrthoDB" id="9789567at2"/>
<dbReference type="UniPathway" id="UPA00391"/>
<dbReference type="Proteomes" id="UP000002483">
    <property type="component" value="Chromosome"/>
</dbReference>
<dbReference type="GO" id="GO:0005524">
    <property type="term" value="F:ATP binding"/>
    <property type="evidence" value="ECO:0007669"/>
    <property type="project" value="UniProtKB-UniRule"/>
</dbReference>
<dbReference type="GO" id="GO:0016879">
    <property type="term" value="F:ligase activity, forming carbon-nitrogen bonds"/>
    <property type="evidence" value="ECO:0007669"/>
    <property type="project" value="UniProtKB-UniRule"/>
</dbReference>
<dbReference type="GO" id="GO:0008270">
    <property type="term" value="F:zinc ion binding"/>
    <property type="evidence" value="ECO:0007669"/>
    <property type="project" value="UniProtKB-UniRule"/>
</dbReference>
<dbReference type="GO" id="GO:0008616">
    <property type="term" value="P:queuosine biosynthetic process"/>
    <property type="evidence" value="ECO:0007669"/>
    <property type="project" value="UniProtKB-UniRule"/>
</dbReference>
<dbReference type="CDD" id="cd01995">
    <property type="entry name" value="QueC-like"/>
    <property type="match status" value="1"/>
</dbReference>
<dbReference type="Gene3D" id="3.40.50.620">
    <property type="entry name" value="HUPs"/>
    <property type="match status" value="1"/>
</dbReference>
<dbReference type="HAMAP" id="MF_01633">
    <property type="entry name" value="QueC"/>
    <property type="match status" value="1"/>
</dbReference>
<dbReference type="InterPro" id="IPR018317">
    <property type="entry name" value="QueC"/>
</dbReference>
<dbReference type="InterPro" id="IPR014729">
    <property type="entry name" value="Rossmann-like_a/b/a_fold"/>
</dbReference>
<dbReference type="NCBIfam" id="TIGR00364">
    <property type="entry name" value="7-cyano-7-deazaguanine synthase QueC"/>
    <property type="match status" value="1"/>
</dbReference>
<dbReference type="PANTHER" id="PTHR42914">
    <property type="entry name" value="7-CYANO-7-DEAZAGUANINE SYNTHASE"/>
    <property type="match status" value="1"/>
</dbReference>
<dbReference type="PANTHER" id="PTHR42914:SF1">
    <property type="entry name" value="7-CYANO-7-DEAZAGUANINE SYNTHASE"/>
    <property type="match status" value="1"/>
</dbReference>
<dbReference type="Pfam" id="PF06508">
    <property type="entry name" value="QueC"/>
    <property type="match status" value="1"/>
</dbReference>
<dbReference type="PIRSF" id="PIRSF006293">
    <property type="entry name" value="ExsB"/>
    <property type="match status" value="1"/>
</dbReference>
<dbReference type="SUPFAM" id="SSF52402">
    <property type="entry name" value="Adenine nucleotide alpha hydrolases-like"/>
    <property type="match status" value="1"/>
</dbReference>
<feature type="chain" id="PRO_0000246789" description="7-cyano-7-deazaguanine synthase">
    <location>
        <begin position="1"/>
        <end position="229"/>
    </location>
</feature>
<feature type="binding site" evidence="1">
    <location>
        <begin position="7"/>
        <end position="17"/>
    </location>
    <ligand>
        <name>ATP</name>
        <dbReference type="ChEBI" id="CHEBI:30616"/>
    </ligand>
</feature>
<feature type="binding site" evidence="1">
    <location>
        <position position="191"/>
    </location>
    <ligand>
        <name>Zn(2+)</name>
        <dbReference type="ChEBI" id="CHEBI:29105"/>
    </ligand>
</feature>
<feature type="binding site" evidence="1">
    <location>
        <position position="199"/>
    </location>
    <ligand>
        <name>Zn(2+)</name>
        <dbReference type="ChEBI" id="CHEBI:29105"/>
    </ligand>
</feature>
<feature type="binding site" evidence="1">
    <location>
        <position position="202"/>
    </location>
    <ligand>
        <name>Zn(2+)</name>
        <dbReference type="ChEBI" id="CHEBI:29105"/>
    </ligand>
</feature>
<feature type="binding site" evidence="1">
    <location>
        <position position="205"/>
    </location>
    <ligand>
        <name>Zn(2+)</name>
        <dbReference type="ChEBI" id="CHEBI:29105"/>
    </ligand>
</feature>
<comment type="function">
    <text evidence="1">Catalyzes the ATP-dependent conversion of 7-carboxy-7-deazaguanine (CDG) to 7-cyano-7-deazaguanine (preQ(0)).</text>
</comment>
<comment type="catalytic activity">
    <reaction evidence="1">
        <text>7-carboxy-7-deazaguanine + NH4(+) + ATP = 7-cyano-7-deazaguanine + ADP + phosphate + H2O + H(+)</text>
        <dbReference type="Rhea" id="RHEA:27982"/>
        <dbReference type="ChEBI" id="CHEBI:15377"/>
        <dbReference type="ChEBI" id="CHEBI:15378"/>
        <dbReference type="ChEBI" id="CHEBI:28938"/>
        <dbReference type="ChEBI" id="CHEBI:30616"/>
        <dbReference type="ChEBI" id="CHEBI:43474"/>
        <dbReference type="ChEBI" id="CHEBI:45075"/>
        <dbReference type="ChEBI" id="CHEBI:61036"/>
        <dbReference type="ChEBI" id="CHEBI:456216"/>
        <dbReference type="EC" id="6.3.4.20"/>
    </reaction>
</comment>
<comment type="cofactor">
    <cofactor evidence="1">
        <name>Zn(2+)</name>
        <dbReference type="ChEBI" id="CHEBI:29105"/>
    </cofactor>
    <text evidence="1">Binds 1 zinc ion per subunit.</text>
</comment>
<comment type="pathway">
    <text evidence="1">Purine metabolism; 7-cyano-7-deazaguanine biosynthesis.</text>
</comment>
<comment type="similarity">
    <text evidence="1">Belongs to the QueC family.</text>
</comment>